<organism>
    <name type="scientific">Arabidopsis thaliana</name>
    <name type="common">Mouse-ear cress</name>
    <dbReference type="NCBI Taxonomy" id="3702"/>
    <lineage>
        <taxon>Eukaryota</taxon>
        <taxon>Viridiplantae</taxon>
        <taxon>Streptophyta</taxon>
        <taxon>Embryophyta</taxon>
        <taxon>Tracheophyta</taxon>
        <taxon>Spermatophyta</taxon>
        <taxon>Magnoliopsida</taxon>
        <taxon>eudicotyledons</taxon>
        <taxon>Gunneridae</taxon>
        <taxon>Pentapetalae</taxon>
        <taxon>rosids</taxon>
        <taxon>malvids</taxon>
        <taxon>Brassicales</taxon>
        <taxon>Brassicaceae</taxon>
        <taxon>Camelineae</taxon>
        <taxon>Arabidopsis</taxon>
    </lineage>
</organism>
<dbReference type="EC" id="2.4.1.-" evidence="5"/>
<dbReference type="EMBL" id="KJ138743">
    <property type="protein sequence ID" value="AHL38683.1"/>
    <property type="molecule type" value="mRNA"/>
</dbReference>
<dbReference type="EMBL" id="AL022224">
    <property type="protein sequence ID" value="CAA18242.1"/>
    <property type="molecule type" value="Genomic_DNA"/>
</dbReference>
<dbReference type="EMBL" id="AL161552">
    <property type="protein sequence ID" value="CAB79017.1"/>
    <property type="molecule type" value="Genomic_DNA"/>
</dbReference>
<dbReference type="EMBL" id="CP002687">
    <property type="protein sequence ID" value="AEE84282.1"/>
    <property type="molecule type" value="Genomic_DNA"/>
</dbReference>
<dbReference type="EMBL" id="AY058866">
    <property type="protein sequence ID" value="AAL24253.1"/>
    <property type="status" value="ALT_FRAME"/>
    <property type="molecule type" value="mRNA"/>
</dbReference>
<dbReference type="EMBL" id="BT000570">
    <property type="protein sequence ID" value="AAN18139.1"/>
    <property type="molecule type" value="mRNA"/>
</dbReference>
<dbReference type="PIR" id="T05325">
    <property type="entry name" value="T05325"/>
</dbReference>
<dbReference type="RefSeq" id="NP_193750.1">
    <property type="nucleotide sequence ID" value="NM_118136.4"/>
</dbReference>
<dbReference type="SMR" id="O65431"/>
<dbReference type="FunCoup" id="O65431">
    <property type="interactions" value="27"/>
</dbReference>
<dbReference type="STRING" id="3702.O65431"/>
<dbReference type="CAZy" id="GT92">
    <property type="family name" value="Glycosyltransferase Family 92"/>
</dbReference>
<dbReference type="PaxDb" id="3702-AT4G20170.1"/>
<dbReference type="ProteomicsDB" id="248476"/>
<dbReference type="EnsemblPlants" id="AT4G20170.1">
    <property type="protein sequence ID" value="AT4G20170.1"/>
    <property type="gene ID" value="AT4G20170"/>
</dbReference>
<dbReference type="GeneID" id="827763"/>
<dbReference type="Gramene" id="AT4G20170.1">
    <property type="protein sequence ID" value="AT4G20170.1"/>
    <property type="gene ID" value="AT4G20170"/>
</dbReference>
<dbReference type="KEGG" id="ath:AT4G20170"/>
<dbReference type="Araport" id="AT4G20170"/>
<dbReference type="TAIR" id="AT4G20170">
    <property type="gene designation" value="GALS3"/>
</dbReference>
<dbReference type="eggNOG" id="KOG4735">
    <property type="taxonomic scope" value="Eukaryota"/>
</dbReference>
<dbReference type="HOGENOM" id="CLU_022400_2_0_1"/>
<dbReference type="InParanoid" id="O65431"/>
<dbReference type="OMA" id="CEWIPLQ"/>
<dbReference type="PhylomeDB" id="O65431"/>
<dbReference type="PRO" id="PR:O65431"/>
<dbReference type="Proteomes" id="UP000006548">
    <property type="component" value="Chromosome 4"/>
</dbReference>
<dbReference type="ExpressionAtlas" id="O65431">
    <property type="expression patterns" value="baseline and differential"/>
</dbReference>
<dbReference type="GO" id="GO:0000139">
    <property type="term" value="C:Golgi membrane"/>
    <property type="evidence" value="ECO:0007669"/>
    <property type="project" value="UniProtKB-SubCell"/>
</dbReference>
<dbReference type="GO" id="GO:0016757">
    <property type="term" value="F:glycosyltransferase activity"/>
    <property type="evidence" value="ECO:0007669"/>
    <property type="project" value="UniProtKB-KW"/>
</dbReference>
<dbReference type="GO" id="GO:0042546">
    <property type="term" value="P:cell wall biogenesis"/>
    <property type="evidence" value="ECO:0000315"/>
    <property type="project" value="TAIR"/>
</dbReference>
<dbReference type="GO" id="GO:0071555">
    <property type="term" value="P:cell wall organization"/>
    <property type="evidence" value="ECO:0007669"/>
    <property type="project" value="UniProtKB-KW"/>
</dbReference>
<dbReference type="InterPro" id="IPR008166">
    <property type="entry name" value="Glyco_transf_92"/>
</dbReference>
<dbReference type="PANTHER" id="PTHR21461:SF54">
    <property type="entry name" value="GALACTAN BETA-1,4-GALACTOSYLTRANSFERASE GALS3"/>
    <property type="match status" value="1"/>
</dbReference>
<dbReference type="PANTHER" id="PTHR21461">
    <property type="entry name" value="GLYCOSYLTRANSFERASE FAMILY 92 PROTEIN"/>
    <property type="match status" value="1"/>
</dbReference>
<dbReference type="Pfam" id="PF01697">
    <property type="entry name" value="Glyco_transf_92"/>
    <property type="match status" value="1"/>
</dbReference>
<gene>
    <name evidence="4" type="primary">GALS3</name>
    <name evidence="6" type="ordered locus">At4g20170</name>
    <name evidence="7" type="ORF">F1C12.90</name>
</gene>
<reference key="1">
    <citation type="journal article" date="2014" name="Plant J.">
        <title>The plant glycosyltransferase clone collection for functional genomics.</title>
        <authorList>
            <person name="Lao J."/>
            <person name="Oikawa A."/>
            <person name="Bromley J.R."/>
            <person name="McInerney P."/>
            <person name="Suttangkakul A."/>
            <person name="Smith-Moritz A.M."/>
            <person name="Plahar H."/>
            <person name="Chiu T.-Y."/>
            <person name="Gonzalez Fernandez-Nino S.M.G."/>
            <person name="Ebert B."/>
            <person name="Yang F."/>
            <person name="Christiansen K.M."/>
            <person name="Hansen S.F."/>
            <person name="Stonebloom S."/>
            <person name="Adams P.D."/>
            <person name="Ronald P.C."/>
            <person name="Hillson N.J."/>
            <person name="Hadi M.Z."/>
            <person name="Vega-Sanchez M.E."/>
            <person name="Loque D."/>
            <person name="Scheller H.V."/>
            <person name="Heazlewood J.L."/>
        </authorList>
    </citation>
    <scope>NUCLEOTIDE SEQUENCE [MRNA]</scope>
    <source>
        <strain>cv. Columbia</strain>
    </source>
</reference>
<reference key="2">
    <citation type="journal article" date="1999" name="Nature">
        <title>Sequence and analysis of chromosome 4 of the plant Arabidopsis thaliana.</title>
        <authorList>
            <person name="Mayer K.F.X."/>
            <person name="Schueller C."/>
            <person name="Wambutt R."/>
            <person name="Murphy G."/>
            <person name="Volckaert G."/>
            <person name="Pohl T."/>
            <person name="Duesterhoeft A."/>
            <person name="Stiekema W."/>
            <person name="Entian K.-D."/>
            <person name="Terryn N."/>
            <person name="Harris B."/>
            <person name="Ansorge W."/>
            <person name="Brandt P."/>
            <person name="Grivell L.A."/>
            <person name="Rieger M."/>
            <person name="Weichselgartner M."/>
            <person name="de Simone V."/>
            <person name="Obermaier B."/>
            <person name="Mache R."/>
            <person name="Mueller M."/>
            <person name="Kreis M."/>
            <person name="Delseny M."/>
            <person name="Puigdomenech P."/>
            <person name="Watson M."/>
            <person name="Schmidtheini T."/>
            <person name="Reichert B."/>
            <person name="Portetelle D."/>
            <person name="Perez-Alonso M."/>
            <person name="Boutry M."/>
            <person name="Bancroft I."/>
            <person name="Vos P."/>
            <person name="Hoheisel J."/>
            <person name="Zimmermann W."/>
            <person name="Wedler H."/>
            <person name="Ridley P."/>
            <person name="Langham S.-A."/>
            <person name="McCullagh B."/>
            <person name="Bilham L."/>
            <person name="Robben J."/>
            <person name="van der Schueren J."/>
            <person name="Grymonprez B."/>
            <person name="Chuang Y.-J."/>
            <person name="Vandenbussche F."/>
            <person name="Braeken M."/>
            <person name="Weltjens I."/>
            <person name="Voet M."/>
            <person name="Bastiaens I."/>
            <person name="Aert R."/>
            <person name="Defoor E."/>
            <person name="Weitzenegger T."/>
            <person name="Bothe G."/>
            <person name="Ramsperger U."/>
            <person name="Hilbert H."/>
            <person name="Braun M."/>
            <person name="Holzer E."/>
            <person name="Brandt A."/>
            <person name="Peters S."/>
            <person name="van Staveren M."/>
            <person name="Dirkse W."/>
            <person name="Mooijman P."/>
            <person name="Klein Lankhorst R."/>
            <person name="Rose M."/>
            <person name="Hauf J."/>
            <person name="Koetter P."/>
            <person name="Berneiser S."/>
            <person name="Hempel S."/>
            <person name="Feldpausch M."/>
            <person name="Lamberth S."/>
            <person name="Van den Daele H."/>
            <person name="De Keyser A."/>
            <person name="Buysshaert C."/>
            <person name="Gielen J."/>
            <person name="Villarroel R."/>
            <person name="De Clercq R."/>
            <person name="van Montagu M."/>
            <person name="Rogers J."/>
            <person name="Cronin A."/>
            <person name="Quail M.A."/>
            <person name="Bray-Allen S."/>
            <person name="Clark L."/>
            <person name="Doggett J."/>
            <person name="Hall S."/>
            <person name="Kay M."/>
            <person name="Lennard N."/>
            <person name="McLay K."/>
            <person name="Mayes R."/>
            <person name="Pettett A."/>
            <person name="Rajandream M.A."/>
            <person name="Lyne M."/>
            <person name="Benes V."/>
            <person name="Rechmann S."/>
            <person name="Borkova D."/>
            <person name="Bloecker H."/>
            <person name="Scharfe M."/>
            <person name="Grimm M."/>
            <person name="Loehnert T.-H."/>
            <person name="Dose S."/>
            <person name="de Haan M."/>
            <person name="Maarse A.C."/>
            <person name="Schaefer M."/>
            <person name="Mueller-Auer S."/>
            <person name="Gabel C."/>
            <person name="Fuchs M."/>
            <person name="Fartmann B."/>
            <person name="Granderath K."/>
            <person name="Dauner D."/>
            <person name="Herzl A."/>
            <person name="Neumann S."/>
            <person name="Argiriou A."/>
            <person name="Vitale D."/>
            <person name="Liguori R."/>
            <person name="Piravandi E."/>
            <person name="Massenet O."/>
            <person name="Quigley F."/>
            <person name="Clabauld G."/>
            <person name="Muendlein A."/>
            <person name="Felber R."/>
            <person name="Schnabl S."/>
            <person name="Hiller R."/>
            <person name="Schmidt W."/>
            <person name="Lecharny A."/>
            <person name="Aubourg S."/>
            <person name="Chefdor F."/>
            <person name="Cooke R."/>
            <person name="Berger C."/>
            <person name="Monfort A."/>
            <person name="Casacuberta E."/>
            <person name="Gibbons T."/>
            <person name="Weber N."/>
            <person name="Vandenbol M."/>
            <person name="Bargues M."/>
            <person name="Terol J."/>
            <person name="Torres A."/>
            <person name="Perez-Perez A."/>
            <person name="Purnelle B."/>
            <person name="Bent E."/>
            <person name="Johnson S."/>
            <person name="Tacon D."/>
            <person name="Jesse T."/>
            <person name="Heijnen L."/>
            <person name="Schwarz S."/>
            <person name="Scholler P."/>
            <person name="Heber S."/>
            <person name="Francs P."/>
            <person name="Bielke C."/>
            <person name="Frishman D."/>
            <person name="Haase D."/>
            <person name="Lemcke K."/>
            <person name="Mewes H.-W."/>
            <person name="Stocker S."/>
            <person name="Zaccaria P."/>
            <person name="Bevan M."/>
            <person name="Wilson R.K."/>
            <person name="de la Bastide M."/>
            <person name="Habermann K."/>
            <person name="Parnell L."/>
            <person name="Dedhia N."/>
            <person name="Gnoj L."/>
            <person name="Schutz K."/>
            <person name="Huang E."/>
            <person name="Spiegel L."/>
            <person name="Sekhon M."/>
            <person name="Murray J."/>
            <person name="Sheet P."/>
            <person name="Cordes M."/>
            <person name="Abu-Threideh J."/>
            <person name="Stoneking T."/>
            <person name="Kalicki J."/>
            <person name="Graves T."/>
            <person name="Harmon G."/>
            <person name="Edwards J."/>
            <person name="Latreille P."/>
            <person name="Courtney L."/>
            <person name="Cloud J."/>
            <person name="Abbott A."/>
            <person name="Scott K."/>
            <person name="Johnson D."/>
            <person name="Minx P."/>
            <person name="Bentley D."/>
            <person name="Fulton B."/>
            <person name="Miller N."/>
            <person name="Greco T."/>
            <person name="Kemp K."/>
            <person name="Kramer J."/>
            <person name="Fulton L."/>
            <person name="Mardis E."/>
            <person name="Dante M."/>
            <person name="Pepin K."/>
            <person name="Hillier L.W."/>
            <person name="Nelson J."/>
            <person name="Spieth J."/>
            <person name="Ryan E."/>
            <person name="Andrews S."/>
            <person name="Geisel C."/>
            <person name="Layman D."/>
            <person name="Du H."/>
            <person name="Ali J."/>
            <person name="Berghoff A."/>
            <person name="Jones K."/>
            <person name="Drone K."/>
            <person name="Cotton M."/>
            <person name="Joshu C."/>
            <person name="Antonoiu B."/>
            <person name="Zidanic M."/>
            <person name="Strong C."/>
            <person name="Sun H."/>
            <person name="Lamar B."/>
            <person name="Yordan C."/>
            <person name="Ma P."/>
            <person name="Zhong J."/>
            <person name="Preston R."/>
            <person name="Vil D."/>
            <person name="Shekher M."/>
            <person name="Matero A."/>
            <person name="Shah R."/>
            <person name="Swaby I.K."/>
            <person name="O'Shaughnessy A."/>
            <person name="Rodriguez M."/>
            <person name="Hoffman J."/>
            <person name="Till S."/>
            <person name="Granat S."/>
            <person name="Shohdy N."/>
            <person name="Hasegawa A."/>
            <person name="Hameed A."/>
            <person name="Lodhi M."/>
            <person name="Johnson A."/>
            <person name="Chen E."/>
            <person name="Marra M.A."/>
            <person name="Martienssen R."/>
            <person name="McCombie W.R."/>
        </authorList>
    </citation>
    <scope>NUCLEOTIDE SEQUENCE [LARGE SCALE GENOMIC DNA]</scope>
    <source>
        <strain>cv. Columbia</strain>
    </source>
</reference>
<reference key="3">
    <citation type="journal article" date="2017" name="Plant J.">
        <title>Araport11: a complete reannotation of the Arabidopsis thaliana reference genome.</title>
        <authorList>
            <person name="Cheng C.Y."/>
            <person name="Krishnakumar V."/>
            <person name="Chan A.P."/>
            <person name="Thibaud-Nissen F."/>
            <person name="Schobel S."/>
            <person name="Town C.D."/>
        </authorList>
    </citation>
    <scope>GENOME REANNOTATION</scope>
    <source>
        <strain>cv. Columbia</strain>
    </source>
</reference>
<reference key="4">
    <citation type="journal article" date="2003" name="Science">
        <title>Empirical analysis of transcriptional activity in the Arabidopsis genome.</title>
        <authorList>
            <person name="Yamada K."/>
            <person name="Lim J."/>
            <person name="Dale J.M."/>
            <person name="Chen H."/>
            <person name="Shinn P."/>
            <person name="Palm C.J."/>
            <person name="Southwick A.M."/>
            <person name="Wu H.C."/>
            <person name="Kim C.J."/>
            <person name="Nguyen M."/>
            <person name="Pham P.K."/>
            <person name="Cheuk R.F."/>
            <person name="Karlin-Newmann G."/>
            <person name="Liu S.X."/>
            <person name="Lam B."/>
            <person name="Sakano H."/>
            <person name="Wu T."/>
            <person name="Yu G."/>
            <person name="Miranda M."/>
            <person name="Quach H.L."/>
            <person name="Tripp M."/>
            <person name="Chang C.H."/>
            <person name="Lee J.M."/>
            <person name="Toriumi M.J."/>
            <person name="Chan M.M."/>
            <person name="Tang C.C."/>
            <person name="Onodera C.S."/>
            <person name="Deng J.M."/>
            <person name="Akiyama K."/>
            <person name="Ansari Y."/>
            <person name="Arakawa T."/>
            <person name="Banh J."/>
            <person name="Banno F."/>
            <person name="Bowser L."/>
            <person name="Brooks S.Y."/>
            <person name="Carninci P."/>
            <person name="Chao Q."/>
            <person name="Choy N."/>
            <person name="Enju A."/>
            <person name="Goldsmith A.D."/>
            <person name="Gurjal M."/>
            <person name="Hansen N.F."/>
            <person name="Hayashizaki Y."/>
            <person name="Johnson-Hopson C."/>
            <person name="Hsuan V.W."/>
            <person name="Iida K."/>
            <person name="Karnes M."/>
            <person name="Khan S."/>
            <person name="Koesema E."/>
            <person name="Ishida J."/>
            <person name="Jiang P.X."/>
            <person name="Jones T."/>
            <person name="Kawai J."/>
            <person name="Kamiya A."/>
            <person name="Meyers C."/>
            <person name="Nakajima M."/>
            <person name="Narusaka M."/>
            <person name="Seki M."/>
            <person name="Sakurai T."/>
            <person name="Satou M."/>
            <person name="Tamse R."/>
            <person name="Vaysberg M."/>
            <person name="Wallender E.K."/>
            <person name="Wong C."/>
            <person name="Yamamura Y."/>
            <person name="Yuan S."/>
            <person name="Shinozaki K."/>
            <person name="Davis R.W."/>
            <person name="Theologis A."/>
            <person name="Ecker J.R."/>
        </authorList>
    </citation>
    <scope>NUCLEOTIDE SEQUENCE [LARGE SCALE MRNA]</scope>
    <source>
        <strain>cv. Columbia</strain>
    </source>
</reference>
<reference key="5">
    <citation type="journal article" date="2012" name="Plant Cell">
        <title>Pectin biosynthesis: GALS1 in Arabidopsis thaliana is a beta-1,4-galactan beta-1,4-galactosyltransferase.</title>
        <authorList>
            <person name="Liwanag A.J."/>
            <person name="Ebert B."/>
            <person name="Verhertbruggen Y."/>
            <person name="Rennie E.A."/>
            <person name="Rautengarten C."/>
            <person name="Oikawa A."/>
            <person name="Andersen M.C."/>
            <person name="Clausen M.H."/>
            <person name="Scheller H.V."/>
        </authorList>
    </citation>
    <scope>FUNCTION</scope>
    <scope>TISSUE SPECIFICITY</scope>
    <scope>DISRUPTION PHENOTYPE</scope>
</reference>
<keyword id="KW-0961">Cell wall biogenesis/degradation</keyword>
<keyword id="KW-0328">Glycosyltransferase</keyword>
<keyword id="KW-0333">Golgi apparatus</keyword>
<keyword id="KW-0472">Membrane</keyword>
<keyword id="KW-1185">Reference proteome</keyword>
<keyword id="KW-0808">Transferase</keyword>
<keyword id="KW-0812">Transmembrane</keyword>
<keyword id="KW-1133">Transmembrane helix</keyword>
<protein>
    <recommendedName>
        <fullName evidence="5">Galactan beta-1,4-galactosyltransferase GALS3</fullName>
        <ecNumber evidence="5">2.4.1.-</ecNumber>
    </recommendedName>
    <alternativeName>
        <fullName>Beta-1,4-galactan synthase</fullName>
    </alternativeName>
    <alternativeName>
        <fullName evidence="4">Galactan synthase 3</fullName>
    </alternativeName>
</protein>
<accession>O65431</accession>
<accession>Q93Z06</accession>
<feature type="chain" id="PRO_0000435705" description="Galactan beta-1,4-galactosyltransferase GALS3">
    <location>
        <begin position="1"/>
        <end position="504"/>
    </location>
</feature>
<feature type="transmembrane region" description="Helical" evidence="2">
    <location>
        <begin position="30"/>
        <end position="50"/>
    </location>
</feature>
<feature type="domain" description="GT92" evidence="2">
    <location>
        <begin position="242"/>
        <end position="456"/>
    </location>
</feature>
<name>GALS3_ARATH</name>
<proteinExistence type="evidence at transcript level"/>
<comment type="function">
    <text evidence="3">Involved in the biosynthesis of beta-1,4-galactan. Beta-1,4-galactans are abundant polysaccharides in plant cell walls and are found as side-chain of rhamnogalacturonan I, which is a major component of pectin.</text>
</comment>
<comment type="subcellular location">
    <subcellularLocation>
        <location evidence="1">Golgi apparatus membrane</location>
        <topology evidence="2">Single-pass membrane protein</topology>
    </subcellularLocation>
</comment>
<comment type="tissue specificity">
    <text evidence="3">Expressed in root caps, mature leaves, top of the stems and seeds.</text>
</comment>
<comment type="disruption phenotype">
    <text evidence="3">No visible phenotype under normal growth conditions, but mutant plants have reduced content of beta-1,4-galactan in leaf cell wall.</text>
</comment>
<comment type="similarity">
    <text evidence="5">Belongs to the glycosyltransferase 92 family.</text>
</comment>
<comment type="sequence caution" evidence="5">
    <conflict type="frameshift">
        <sequence resource="EMBL-CDS" id="AAL24253"/>
    </conflict>
</comment>
<evidence type="ECO:0000250" key="1">
    <source>
        <dbReference type="UniProtKB" id="O22807"/>
    </source>
</evidence>
<evidence type="ECO:0000255" key="2"/>
<evidence type="ECO:0000269" key="3">
    <source>
    </source>
</evidence>
<evidence type="ECO:0000303" key="4">
    <source>
    </source>
</evidence>
<evidence type="ECO:0000305" key="5"/>
<evidence type="ECO:0000312" key="6">
    <source>
        <dbReference type="Araport" id="AT4G20170"/>
    </source>
</evidence>
<evidence type="ECO:0000312" key="7">
    <source>
        <dbReference type="EMBL" id="CAA18242.1"/>
    </source>
</evidence>
<sequence>MAMVKEKEQNTKDKKLLVGVIWNFSAELKLTFMALLVLCTLATLLPFIPSSFSLSTSDFRFCISRFSSAVPLNTTTTVEESSSSPSPEKNLDRVLDNGVIKRTFTGYGSAAYNFVSMSAYRGGVNSFAVIGLSSKPLHVYGHPSYRCEWVSLDPTQDPISTTGFKILTDWGYGRIYTTVVVNCTFSSISAVNPQNSGGTLILHATTGDPTLNLTDSISVLTEPPKSVDFDLYNSTKKTKKYDYLYCGSSLYGNLSPQRVREWIAYHVRFFGERSHFVLHDAGGIHEEVFEVLKPWIELGRVTLHDIRDQERFDGYYHNQFMIVNDCLHRYRFMTKWMFFFDVDEFLHVPVKETISSVMESLEEYSQFTIEQMPMSSRICYSGDGPARTYRKWGIEKLAYRDVKKVPRRDRKYAVQPENVFATGVHMSQNLQGKTYHKAESKIRYFHYHGSISQRREPCRQLFNDSRVVFENTPYVLDTTICDVGLAVRTFELRTIGDRLLRTRQ</sequence>